<sequence>MSNPLSELSAAGVAVWLDDISRDRLRTGNLADLVANRSVVGVTSNPTIFQKAIASSDLYNEQLRDLKVRGVDVGEAVRAITAADVREACDVLRGVYDASGGVDGRVSLEVDPRLAHEAERTVAEARALWWLVDRPNLFIKIPATQDGLPAITETLAQGISVNVTLIFGLDRYDAVIDAFMSGVEQAIEAGRDVSDLASVASFFVSRVDSEVDARLDKIGTPEAKALHAKTAIANARLAYERYEKAFATPRWKALAAKGAKPQRPLWASTSTKDPSLPDTIYVSELIAPGTVNTMPEATLQAFADHGQVKGETIRPHYDDARQVFAALAAVGVDIDDVIETLETQGVQKFEDSWNQLLGTIAQQLGRSGTDG</sequence>
<reference key="1">
    <citation type="journal article" date="2007" name="Genome Res.">
        <title>Genome characteristics of facultatively symbiotic Frankia sp. strains reflect host range and host plant biogeography.</title>
        <authorList>
            <person name="Normand P."/>
            <person name="Lapierre P."/>
            <person name="Tisa L.S."/>
            <person name="Gogarten J.P."/>
            <person name="Alloisio N."/>
            <person name="Bagnarol E."/>
            <person name="Bassi C.A."/>
            <person name="Berry A.M."/>
            <person name="Bickhart D.M."/>
            <person name="Choisne N."/>
            <person name="Couloux A."/>
            <person name="Cournoyer B."/>
            <person name="Cruveiller S."/>
            <person name="Daubin V."/>
            <person name="Demange N."/>
            <person name="Francino M.P."/>
            <person name="Goltsman E."/>
            <person name="Huang Y."/>
            <person name="Kopp O.R."/>
            <person name="Labarre L."/>
            <person name="Lapidus A."/>
            <person name="Lavire C."/>
            <person name="Marechal J."/>
            <person name="Martinez M."/>
            <person name="Mastronunzio J.E."/>
            <person name="Mullin B.C."/>
            <person name="Niemann J."/>
            <person name="Pujic P."/>
            <person name="Rawnsley T."/>
            <person name="Rouy Z."/>
            <person name="Schenowitz C."/>
            <person name="Sellstedt A."/>
            <person name="Tavares F."/>
            <person name="Tomkins J.P."/>
            <person name="Vallenet D."/>
            <person name="Valverde C."/>
            <person name="Wall L.G."/>
            <person name="Wang Y."/>
            <person name="Medigue C."/>
            <person name="Benson D.R."/>
        </authorList>
    </citation>
    <scope>NUCLEOTIDE SEQUENCE [LARGE SCALE GENOMIC DNA]</scope>
    <source>
        <strain>DSM 45986 / CECT 9034 / ACN14a</strain>
    </source>
</reference>
<evidence type="ECO:0000255" key="1">
    <source>
        <dbReference type="HAMAP-Rule" id="MF_00493"/>
    </source>
</evidence>
<feature type="chain" id="PRO_1000026523" description="Transaldolase">
    <location>
        <begin position="1"/>
        <end position="371"/>
    </location>
</feature>
<feature type="active site" description="Schiff-base intermediate with substrate" evidence="1">
    <location>
        <position position="140"/>
    </location>
</feature>
<proteinExistence type="inferred from homology"/>
<gene>
    <name evidence="1" type="primary">tal</name>
    <name type="ordered locus">FRAAL4574</name>
</gene>
<comment type="function">
    <text evidence="1">Transaldolase is important for the balance of metabolites in the pentose-phosphate pathway.</text>
</comment>
<comment type="catalytic activity">
    <reaction evidence="1">
        <text>D-sedoheptulose 7-phosphate + D-glyceraldehyde 3-phosphate = D-erythrose 4-phosphate + beta-D-fructose 6-phosphate</text>
        <dbReference type="Rhea" id="RHEA:17053"/>
        <dbReference type="ChEBI" id="CHEBI:16897"/>
        <dbReference type="ChEBI" id="CHEBI:57483"/>
        <dbReference type="ChEBI" id="CHEBI:57634"/>
        <dbReference type="ChEBI" id="CHEBI:59776"/>
        <dbReference type="EC" id="2.2.1.2"/>
    </reaction>
</comment>
<comment type="pathway">
    <text evidence="1">Carbohydrate degradation; pentose phosphate pathway; D-glyceraldehyde 3-phosphate and beta-D-fructose 6-phosphate from D-ribose 5-phosphate and D-xylulose 5-phosphate (non-oxidative stage): step 2/3.</text>
</comment>
<comment type="subcellular location">
    <subcellularLocation>
        <location evidence="1">Cytoplasm</location>
    </subcellularLocation>
</comment>
<comment type="similarity">
    <text evidence="1">Belongs to the transaldolase family. Type 2 subfamily.</text>
</comment>
<dbReference type="EC" id="2.2.1.2" evidence="1"/>
<dbReference type="EMBL" id="CT573213">
    <property type="protein sequence ID" value="CAJ63216.1"/>
    <property type="molecule type" value="Genomic_DNA"/>
</dbReference>
<dbReference type="RefSeq" id="WP_011605691.1">
    <property type="nucleotide sequence ID" value="NC_008278.1"/>
</dbReference>
<dbReference type="SMR" id="Q0RH18"/>
<dbReference type="STRING" id="326424.FRAAL4574"/>
<dbReference type="KEGG" id="fal:FRAAL4574"/>
<dbReference type="eggNOG" id="COG0176">
    <property type="taxonomic scope" value="Bacteria"/>
</dbReference>
<dbReference type="HOGENOM" id="CLU_050771_1_0_11"/>
<dbReference type="OrthoDB" id="9809101at2"/>
<dbReference type="UniPathway" id="UPA00115">
    <property type="reaction ID" value="UER00414"/>
</dbReference>
<dbReference type="Proteomes" id="UP000000657">
    <property type="component" value="Chromosome"/>
</dbReference>
<dbReference type="GO" id="GO:0005737">
    <property type="term" value="C:cytoplasm"/>
    <property type="evidence" value="ECO:0007669"/>
    <property type="project" value="UniProtKB-SubCell"/>
</dbReference>
<dbReference type="GO" id="GO:0004801">
    <property type="term" value="F:transaldolase activity"/>
    <property type="evidence" value="ECO:0007669"/>
    <property type="project" value="UniProtKB-UniRule"/>
</dbReference>
<dbReference type="GO" id="GO:0005975">
    <property type="term" value="P:carbohydrate metabolic process"/>
    <property type="evidence" value="ECO:0007669"/>
    <property type="project" value="InterPro"/>
</dbReference>
<dbReference type="GO" id="GO:0006098">
    <property type="term" value="P:pentose-phosphate shunt"/>
    <property type="evidence" value="ECO:0007669"/>
    <property type="project" value="UniProtKB-UniRule"/>
</dbReference>
<dbReference type="CDD" id="cd00955">
    <property type="entry name" value="Transaldolase_like"/>
    <property type="match status" value="1"/>
</dbReference>
<dbReference type="Gene3D" id="3.20.20.70">
    <property type="entry name" value="Aldolase class I"/>
    <property type="match status" value="1"/>
</dbReference>
<dbReference type="HAMAP" id="MF_00493">
    <property type="entry name" value="Transaldolase_2"/>
    <property type="match status" value="1"/>
</dbReference>
<dbReference type="InterPro" id="IPR013785">
    <property type="entry name" value="Aldolase_TIM"/>
</dbReference>
<dbReference type="InterPro" id="IPR001585">
    <property type="entry name" value="TAL/FSA"/>
</dbReference>
<dbReference type="InterPro" id="IPR004732">
    <property type="entry name" value="Transaldolase_2"/>
</dbReference>
<dbReference type="InterPro" id="IPR018225">
    <property type="entry name" value="Transaldolase_AS"/>
</dbReference>
<dbReference type="NCBIfam" id="NF002881">
    <property type="entry name" value="PRK03343.1"/>
    <property type="match status" value="1"/>
</dbReference>
<dbReference type="NCBIfam" id="TIGR00876">
    <property type="entry name" value="tal_mycobact"/>
    <property type="match status" value="1"/>
</dbReference>
<dbReference type="PANTHER" id="PTHR10683">
    <property type="entry name" value="TRANSALDOLASE"/>
    <property type="match status" value="1"/>
</dbReference>
<dbReference type="PANTHER" id="PTHR10683:SF31">
    <property type="entry name" value="TRANSALDOLASE"/>
    <property type="match status" value="1"/>
</dbReference>
<dbReference type="Pfam" id="PF00923">
    <property type="entry name" value="TAL_FSA"/>
    <property type="match status" value="1"/>
</dbReference>
<dbReference type="PIRSF" id="PIRSF036915">
    <property type="entry name" value="Trnald_Bac_Plnt"/>
    <property type="match status" value="1"/>
</dbReference>
<dbReference type="SUPFAM" id="SSF51569">
    <property type="entry name" value="Aldolase"/>
    <property type="match status" value="1"/>
</dbReference>
<dbReference type="PROSITE" id="PS01054">
    <property type="entry name" value="TRANSALDOLASE_1"/>
    <property type="match status" value="1"/>
</dbReference>
<keyword id="KW-0963">Cytoplasm</keyword>
<keyword id="KW-0570">Pentose shunt</keyword>
<keyword id="KW-1185">Reference proteome</keyword>
<keyword id="KW-0704">Schiff base</keyword>
<keyword id="KW-0808">Transferase</keyword>
<accession>Q0RH18</accession>
<name>TAL_FRAAA</name>
<organism>
    <name type="scientific">Frankia alni (strain DSM 45986 / CECT 9034 / ACN14a)</name>
    <dbReference type="NCBI Taxonomy" id="326424"/>
    <lineage>
        <taxon>Bacteria</taxon>
        <taxon>Bacillati</taxon>
        <taxon>Actinomycetota</taxon>
        <taxon>Actinomycetes</taxon>
        <taxon>Frankiales</taxon>
        <taxon>Frankiaceae</taxon>
        <taxon>Frankia</taxon>
    </lineage>
</organism>
<protein>
    <recommendedName>
        <fullName evidence="1">Transaldolase</fullName>
        <ecNumber evidence="1">2.2.1.2</ecNumber>
    </recommendedName>
</protein>